<feature type="chain" id="PRO_1000117842" description="Phosphoribosylaminoimidazole-succinocarboxamide synthase">
    <location>
        <begin position="1"/>
        <end position="367"/>
    </location>
</feature>
<protein>
    <recommendedName>
        <fullName evidence="1">Phosphoribosylaminoimidazole-succinocarboxamide synthase</fullName>
        <ecNumber evidence="1">6.3.2.6</ecNumber>
    </recommendedName>
    <alternativeName>
        <fullName evidence="1">SAICAR synthetase</fullName>
    </alternativeName>
</protein>
<dbReference type="EC" id="6.3.2.6" evidence="1"/>
<dbReference type="EMBL" id="CP000282">
    <property type="protein sequence ID" value="ABD79931.1"/>
    <property type="molecule type" value="Genomic_DNA"/>
</dbReference>
<dbReference type="RefSeq" id="WP_011467152.1">
    <property type="nucleotide sequence ID" value="NC_007912.1"/>
</dbReference>
<dbReference type="SMR" id="Q21MZ8"/>
<dbReference type="STRING" id="203122.Sde_0669"/>
<dbReference type="GeneID" id="98612357"/>
<dbReference type="KEGG" id="sde:Sde_0669"/>
<dbReference type="eggNOG" id="COG0152">
    <property type="taxonomic scope" value="Bacteria"/>
</dbReference>
<dbReference type="HOGENOM" id="CLU_064197_0_0_6"/>
<dbReference type="OrthoDB" id="9801549at2"/>
<dbReference type="UniPathway" id="UPA00074">
    <property type="reaction ID" value="UER00131"/>
</dbReference>
<dbReference type="Proteomes" id="UP000001947">
    <property type="component" value="Chromosome"/>
</dbReference>
<dbReference type="GO" id="GO:0005737">
    <property type="term" value="C:cytoplasm"/>
    <property type="evidence" value="ECO:0007669"/>
    <property type="project" value="TreeGrafter"/>
</dbReference>
<dbReference type="GO" id="GO:0005524">
    <property type="term" value="F:ATP binding"/>
    <property type="evidence" value="ECO:0007669"/>
    <property type="project" value="UniProtKB-KW"/>
</dbReference>
<dbReference type="GO" id="GO:0004639">
    <property type="term" value="F:phosphoribosylaminoimidazolesuccinocarboxamide synthase activity"/>
    <property type="evidence" value="ECO:0007669"/>
    <property type="project" value="UniProtKB-UniRule"/>
</dbReference>
<dbReference type="GO" id="GO:0006189">
    <property type="term" value="P:'de novo' IMP biosynthetic process"/>
    <property type="evidence" value="ECO:0007669"/>
    <property type="project" value="UniProtKB-UniRule"/>
</dbReference>
<dbReference type="CDD" id="cd01414">
    <property type="entry name" value="SAICAR_synt_Sc"/>
    <property type="match status" value="1"/>
</dbReference>
<dbReference type="Gene3D" id="3.30.470.20">
    <property type="entry name" value="ATP-grasp fold, B domain"/>
    <property type="match status" value="1"/>
</dbReference>
<dbReference type="Gene3D" id="3.30.200.20">
    <property type="entry name" value="Phosphorylase Kinase, domain 1"/>
    <property type="match status" value="1"/>
</dbReference>
<dbReference type="HAMAP" id="MF_00137">
    <property type="entry name" value="SAICAR_synth"/>
    <property type="match status" value="1"/>
</dbReference>
<dbReference type="InterPro" id="IPR028923">
    <property type="entry name" value="SAICAR_synt/ADE2_N"/>
</dbReference>
<dbReference type="InterPro" id="IPR014106">
    <property type="entry name" value="SAICAR_synthase_Vibrio-typ"/>
</dbReference>
<dbReference type="NCBIfam" id="NF010567">
    <property type="entry name" value="PRK13960.1"/>
    <property type="match status" value="1"/>
</dbReference>
<dbReference type="NCBIfam" id="TIGR02735">
    <property type="entry name" value="purC_vibrio"/>
    <property type="match status" value="1"/>
</dbReference>
<dbReference type="PANTHER" id="PTHR43700">
    <property type="entry name" value="PHOSPHORIBOSYLAMINOIMIDAZOLE-SUCCINOCARBOXAMIDE SYNTHASE"/>
    <property type="match status" value="1"/>
</dbReference>
<dbReference type="PANTHER" id="PTHR43700:SF1">
    <property type="entry name" value="PHOSPHORIBOSYLAMINOIMIDAZOLE-SUCCINOCARBOXAMIDE SYNTHASE"/>
    <property type="match status" value="1"/>
</dbReference>
<dbReference type="Pfam" id="PF01259">
    <property type="entry name" value="SAICAR_synt"/>
    <property type="match status" value="1"/>
</dbReference>
<dbReference type="SUPFAM" id="SSF56104">
    <property type="entry name" value="SAICAR synthase-like"/>
    <property type="match status" value="1"/>
</dbReference>
<organism>
    <name type="scientific">Saccharophagus degradans (strain 2-40 / ATCC 43961 / DSM 17024)</name>
    <dbReference type="NCBI Taxonomy" id="203122"/>
    <lineage>
        <taxon>Bacteria</taxon>
        <taxon>Pseudomonadati</taxon>
        <taxon>Pseudomonadota</taxon>
        <taxon>Gammaproteobacteria</taxon>
        <taxon>Cellvibrionales</taxon>
        <taxon>Cellvibrionaceae</taxon>
        <taxon>Saccharophagus</taxon>
    </lineage>
</organism>
<accession>Q21MZ8</accession>
<proteinExistence type="inferred from homology"/>
<sequence>MSLAHQVLAVNNDLPIRTDKPVHSGKVRSVYWLTAEDSARLIKEKGYNVAADAPLAIMVISDRLSAFDCIWHAEGDVRGVPGKGAALNAISNHWFELFRQNGLADSHILDIPHPFIWIVQKAKPVMIEAICRQYITGSMWRAYSKGERNFCGINLEDGLQKDQKLSELLITPSTKGILKGVPGVPEVDDVNITRADIENNFAAFQFKQKSDIDQYEKLLKEGFNLISGALEELDQIFVDTKFEFGYVTDASGNDKLIYMDEVGTPDSSRIWDGENYRNGKIIEKSKEGFRQTLLSHFPDPDILLNKDRMPERQALAQDNALPIDVFMDLSSTYLDIAEKITGQKIVLSENPKQEIIDILARDFDVII</sequence>
<evidence type="ECO:0000255" key="1">
    <source>
        <dbReference type="HAMAP-Rule" id="MF_00137"/>
    </source>
</evidence>
<comment type="catalytic activity">
    <reaction evidence="1">
        <text>5-amino-1-(5-phospho-D-ribosyl)imidazole-4-carboxylate + L-aspartate + ATP = (2S)-2-[5-amino-1-(5-phospho-beta-D-ribosyl)imidazole-4-carboxamido]succinate + ADP + phosphate + 2 H(+)</text>
        <dbReference type="Rhea" id="RHEA:22628"/>
        <dbReference type="ChEBI" id="CHEBI:15378"/>
        <dbReference type="ChEBI" id="CHEBI:29991"/>
        <dbReference type="ChEBI" id="CHEBI:30616"/>
        <dbReference type="ChEBI" id="CHEBI:43474"/>
        <dbReference type="ChEBI" id="CHEBI:58443"/>
        <dbReference type="ChEBI" id="CHEBI:77657"/>
        <dbReference type="ChEBI" id="CHEBI:456216"/>
        <dbReference type="EC" id="6.3.2.6"/>
    </reaction>
</comment>
<comment type="pathway">
    <text evidence="1">Purine metabolism; IMP biosynthesis via de novo pathway; 5-amino-1-(5-phospho-D-ribosyl)imidazole-4-carboxamide from 5-amino-1-(5-phospho-D-ribosyl)imidazole-4-carboxylate: step 1/2.</text>
</comment>
<comment type="similarity">
    <text evidence="1">Belongs to the SAICAR synthetase family.</text>
</comment>
<name>PUR7_SACD2</name>
<keyword id="KW-0067">ATP-binding</keyword>
<keyword id="KW-0436">Ligase</keyword>
<keyword id="KW-0547">Nucleotide-binding</keyword>
<keyword id="KW-0658">Purine biosynthesis</keyword>
<keyword id="KW-1185">Reference proteome</keyword>
<gene>
    <name evidence="1" type="primary">purC</name>
    <name type="ordered locus">Sde_0669</name>
</gene>
<reference key="1">
    <citation type="journal article" date="2008" name="PLoS Genet.">
        <title>Complete genome sequence of the complex carbohydrate-degrading marine bacterium, Saccharophagus degradans strain 2-40 T.</title>
        <authorList>
            <person name="Weiner R.M."/>
            <person name="Taylor L.E. II"/>
            <person name="Henrissat B."/>
            <person name="Hauser L."/>
            <person name="Land M."/>
            <person name="Coutinho P.M."/>
            <person name="Rancurel C."/>
            <person name="Saunders E.H."/>
            <person name="Longmire A.G."/>
            <person name="Zhang H."/>
            <person name="Bayer E.A."/>
            <person name="Gilbert H.J."/>
            <person name="Larimer F."/>
            <person name="Zhulin I.B."/>
            <person name="Ekborg N.A."/>
            <person name="Lamed R."/>
            <person name="Richardson P.M."/>
            <person name="Borovok I."/>
            <person name="Hutcheson S."/>
        </authorList>
    </citation>
    <scope>NUCLEOTIDE SEQUENCE [LARGE SCALE GENOMIC DNA]</scope>
    <source>
        <strain>2-40 / ATCC 43961 / DSM 17024</strain>
    </source>
</reference>